<feature type="chain" id="PRO_0000064019" description="Probable aquaporin TIP-type">
    <location>
        <begin position="1"/>
        <end position="249"/>
    </location>
</feature>
<feature type="transmembrane region" description="Helical; Name=1" evidence="2">
    <location>
        <begin position="22"/>
        <end position="42"/>
    </location>
</feature>
<feature type="transmembrane region" description="Helical; Name=2" evidence="2">
    <location>
        <begin position="56"/>
        <end position="76"/>
    </location>
</feature>
<feature type="transmembrane region" description="Helical; Name=3" evidence="2">
    <location>
        <begin position="103"/>
        <end position="123"/>
    </location>
</feature>
<feature type="transmembrane region" description="Helical; Name=4" evidence="2">
    <location>
        <begin position="137"/>
        <end position="157"/>
    </location>
</feature>
<feature type="transmembrane region" description="Helical; Name=5" evidence="2">
    <location>
        <begin position="169"/>
        <end position="189"/>
    </location>
</feature>
<feature type="transmembrane region" description="Helical; Name=6" evidence="2">
    <location>
        <begin position="217"/>
        <end position="237"/>
    </location>
</feature>
<feature type="short sequence motif" description="NPA 1">
    <location>
        <begin position="85"/>
        <end position="87"/>
    </location>
</feature>
<feature type="short sequence motif" description="NPA 2">
    <location>
        <begin position="197"/>
        <end position="199"/>
    </location>
</feature>
<accession>P42067</accession>
<accession>O22525</accession>
<name>TIP1_MEDSA</name>
<sequence>MPIRNIAVGTPQEATHPDTLKAGLAEFISTFIFVFAGSGSGIAYNKLTNDGAATPAGLISASIAHAFALFVAVSVGANISGGHVNPAVFGAFVGGNITLLRGIVYIIAQLLGSIVCSALLVFVTASSVPAFGLSEGVGVGPALVLEIVMTFGLVYTVYATAVDPKKGNIGIIAPIAIGFIVGANILVGGAFTGASMNPAVSFGPAVVSWSWSNHWVYWAGPLIGGGIAGLVYEVLFINSTHEQLPTTDY</sequence>
<dbReference type="EMBL" id="AF020793">
    <property type="protein sequence ID" value="AAC04846.1"/>
    <property type="molecule type" value="mRNA"/>
</dbReference>
<dbReference type="EMBL" id="L36881">
    <property type="protein sequence ID" value="AAB41809.1"/>
    <property type="status" value="ALT_FRAME"/>
    <property type="molecule type" value="mRNA"/>
</dbReference>
<dbReference type="PIR" id="T09297">
    <property type="entry name" value="T09297"/>
</dbReference>
<dbReference type="PIR" id="T09621">
    <property type="entry name" value="T09621"/>
</dbReference>
<dbReference type="SMR" id="P42067"/>
<dbReference type="GO" id="GO:0009705">
    <property type="term" value="C:plant-type vacuole membrane"/>
    <property type="evidence" value="ECO:0007669"/>
    <property type="project" value="TreeGrafter"/>
</dbReference>
<dbReference type="GO" id="GO:0015250">
    <property type="term" value="F:water channel activity"/>
    <property type="evidence" value="ECO:0007669"/>
    <property type="project" value="TreeGrafter"/>
</dbReference>
<dbReference type="CDD" id="cd00333">
    <property type="entry name" value="MIP"/>
    <property type="match status" value="1"/>
</dbReference>
<dbReference type="FunFam" id="1.20.1080.10:FF:000002">
    <property type="entry name" value="Probable aquaporin TIP1-1"/>
    <property type="match status" value="1"/>
</dbReference>
<dbReference type="Gene3D" id="1.20.1080.10">
    <property type="entry name" value="Glycerol uptake facilitator protein"/>
    <property type="match status" value="1"/>
</dbReference>
<dbReference type="InterPro" id="IPR023271">
    <property type="entry name" value="Aquaporin-like"/>
</dbReference>
<dbReference type="InterPro" id="IPR034294">
    <property type="entry name" value="Aquaporin_transptr"/>
</dbReference>
<dbReference type="InterPro" id="IPR000425">
    <property type="entry name" value="MIP"/>
</dbReference>
<dbReference type="PANTHER" id="PTHR45665:SF54">
    <property type="entry name" value="AQUAPORIN TIP1-1"/>
    <property type="match status" value="1"/>
</dbReference>
<dbReference type="PANTHER" id="PTHR45665">
    <property type="entry name" value="AQUAPORIN-8"/>
    <property type="match status" value="1"/>
</dbReference>
<dbReference type="Pfam" id="PF00230">
    <property type="entry name" value="MIP"/>
    <property type="match status" value="1"/>
</dbReference>
<dbReference type="PRINTS" id="PR00783">
    <property type="entry name" value="MINTRINSICP"/>
</dbReference>
<dbReference type="SUPFAM" id="SSF81338">
    <property type="entry name" value="Aquaporin-like"/>
    <property type="match status" value="1"/>
</dbReference>
<comment type="function">
    <text evidence="1">Aquaporins facilitate the transport of water and small neutral solutes across cell membranes.</text>
</comment>
<comment type="subcellular location">
    <subcellularLocation>
        <location evidence="3">Membrane</location>
        <topology evidence="3">Multi-pass membrane protein</topology>
    </subcellularLocation>
</comment>
<comment type="tissue specificity">
    <text>Expression is highest in root tips, with slightly lower levels of hybridizing mRNA in stems, and whole roots, and much lower levels in nodules and leaves.</text>
</comment>
<comment type="domain">
    <text>Aquaporins contain two tandem repeats each containing three membrane-spanning domains and a pore-forming loop with the signature motif Asn-Pro-Ala (NPA).</text>
</comment>
<comment type="similarity">
    <text evidence="3">Belongs to the MIP/aquaporin (TC 1.A.8) family. TIP (TC 1.A.8.10) subfamily.</text>
</comment>
<comment type="sequence caution" evidence="3">
    <conflict type="frameshift">
        <sequence resource="EMBL-CDS" id="AAB41809"/>
    </conflict>
</comment>
<protein>
    <recommendedName>
        <fullName>Probable aquaporin TIP-type</fullName>
    </recommendedName>
    <alternativeName>
        <fullName>Membrane channel protein 1</fullName>
    </alternativeName>
    <alternativeName>
        <fullName>MsMCP1</fullName>
    </alternativeName>
</protein>
<organism>
    <name type="scientific">Medicago sativa</name>
    <name type="common">Alfalfa</name>
    <dbReference type="NCBI Taxonomy" id="3879"/>
    <lineage>
        <taxon>Eukaryota</taxon>
        <taxon>Viridiplantae</taxon>
        <taxon>Streptophyta</taxon>
        <taxon>Embryophyta</taxon>
        <taxon>Tracheophyta</taxon>
        <taxon>Spermatophyta</taxon>
        <taxon>Magnoliopsida</taxon>
        <taxon>eudicotyledons</taxon>
        <taxon>Gunneridae</taxon>
        <taxon>Pentapetalae</taxon>
        <taxon>rosids</taxon>
        <taxon>fabids</taxon>
        <taxon>Fabales</taxon>
        <taxon>Fabaceae</taxon>
        <taxon>Papilionoideae</taxon>
        <taxon>50 kb inversion clade</taxon>
        <taxon>NPAAA clade</taxon>
        <taxon>Hologalegina</taxon>
        <taxon>IRL clade</taxon>
        <taxon>Trifolieae</taxon>
        <taxon>Medicago</taxon>
    </lineage>
</organism>
<evidence type="ECO:0000250" key="1"/>
<evidence type="ECO:0000255" key="2"/>
<evidence type="ECO:0000305" key="3"/>
<proteinExistence type="evidence at transcript level"/>
<reference key="1">
    <citation type="online journal article" date="1998" name="Plant Gene Register">
        <title>cDNA cloning and nucleotide sequence of an aquaporin homolog from Alfalfa.</title>
        <authorList>
            <person name="Gregerson R.G."/>
            <person name="Gantt J.S."/>
            <person name="Vance C.P."/>
        </authorList>
        <locator>PGR98-029</locator>
    </citation>
    <scope>NUCLEOTIDE SEQUENCE [MRNA]</scope>
    <source>
        <strain>cv. Saranac</strain>
        <tissue>Root nodule</tissue>
    </source>
</reference>
<reference key="2">
    <citation type="submission" date="1994-10" db="EMBL/GenBank/DDBJ databases">
        <title>Characterization of an alfalfa membrane channel protein cDNA.</title>
        <authorList>
            <person name="Gregerson R.G."/>
            <person name="Gantt J.S.T."/>
            <person name="Vance C.P."/>
        </authorList>
    </citation>
    <scope>NUCLEOTIDE SEQUENCE [MRNA] OF 1-204</scope>
    <source>
        <strain>cv. Saranac</strain>
        <tissue>Root nodule</tissue>
    </source>
</reference>
<keyword id="KW-0472">Membrane</keyword>
<keyword id="KW-0677">Repeat</keyword>
<keyword id="KW-0812">Transmembrane</keyword>
<keyword id="KW-1133">Transmembrane helix</keyword>
<keyword id="KW-0813">Transport</keyword>
<gene>
    <name type="primary">MCP1</name>
</gene>